<comment type="function">
    <text evidence="2 4">The small GTPases Rab are key regulators of intracellular membrane trafficking, from the formation of transport vesicles to their fusion with membranes (By similarity). Rabs cycle between an inactive GDP-bound form and an active GTP-bound form that is able to recruit to membranes different sets of downstream effectors directly responsible for vesicle formation, movement, tethering and fusion (By similarity). RAB18 is required for the localization of ZFYVE1 to lipid droplets and for its function in mediating the formation of endoplasmic reticulum-lipid droplets (ER-LD) contacts (By similarity). Also required for maintaining endoplasmic reticulum structure (By similarity). Plays a role in apical endocytosis/recycling (By similarity). Plays a key role in eye and brain development and neurodegeneration (By similarity).</text>
</comment>
<comment type="catalytic activity">
    <reaction evidence="4">
        <text>GTP + H2O = GDP + phosphate + H(+)</text>
        <dbReference type="Rhea" id="RHEA:19669"/>
        <dbReference type="ChEBI" id="CHEBI:15377"/>
        <dbReference type="ChEBI" id="CHEBI:15378"/>
        <dbReference type="ChEBI" id="CHEBI:37565"/>
        <dbReference type="ChEBI" id="CHEBI:43474"/>
        <dbReference type="ChEBI" id="CHEBI:58189"/>
        <dbReference type="EC" id="3.6.5.2"/>
    </reaction>
    <physiologicalReaction direction="left-to-right" evidence="4">
        <dbReference type="Rhea" id="RHEA:19670"/>
    </physiologicalReaction>
</comment>
<comment type="cofactor">
    <cofactor evidence="4">
        <name>Mg(2+)</name>
        <dbReference type="ChEBI" id="CHEBI:18420"/>
    </cofactor>
</comment>
<comment type="activity regulation">
    <text evidence="4">Regulated by guanine nucleotide exchange factors (GEFs) which promote the exchange of bound GDP for free GTP. Regulated by GTPase activating proteins (GAPs) which increase the GTP hydrolysis activity at the ER membrane. Inhibited by GDP dissociation inhibitors (GDIs) which prevent Rab-GDP dissociation.</text>
</comment>
<comment type="subunit">
    <text evidence="4">Interacts (in GTP-bound form) with ZFYVE1 (By similarity). Interacts with ZW10 and this interaction is enhanced in the presence of ZFYVE1 (By similarity). Interacts with BSCL2 (By similarity).</text>
</comment>
<comment type="subcellular location">
    <subcellularLocation>
        <location evidence="4">Endoplasmic reticulum membrane</location>
    </subcellularLocation>
    <subcellularLocation>
        <location evidence="4">Golgi apparatus</location>
        <location evidence="4">cis-Golgi network membrane</location>
    </subcellularLocation>
    <subcellularLocation>
        <location evidence="4">Lipid droplet</location>
    </subcellularLocation>
    <subcellularLocation>
        <location evidence="2">Apical cell membrane</location>
    </subcellularLocation>
</comment>
<comment type="domain">
    <text evidence="3">Switch 1, switch 2 and the interswitch regions are characteristic of Rab GTPases and mediate the interactions with Rab downstream effectors. The switch regions undergo conformational changes upon nucleotide binding which drive interaction with specific sets of effector proteins, with most effectors only binding to GTP-bound Rab.</text>
</comment>
<comment type="similarity">
    <text evidence="6">Belongs to the small GTPase superfamily. Rab family.</text>
</comment>
<organism>
    <name type="scientific">Rattus norvegicus</name>
    <name type="common">Rat</name>
    <dbReference type="NCBI Taxonomy" id="10116"/>
    <lineage>
        <taxon>Eukaryota</taxon>
        <taxon>Metazoa</taxon>
        <taxon>Chordata</taxon>
        <taxon>Craniata</taxon>
        <taxon>Vertebrata</taxon>
        <taxon>Euteleostomi</taxon>
        <taxon>Mammalia</taxon>
        <taxon>Eutheria</taxon>
        <taxon>Euarchontoglires</taxon>
        <taxon>Glires</taxon>
        <taxon>Rodentia</taxon>
        <taxon>Myomorpha</taxon>
        <taxon>Muroidea</taxon>
        <taxon>Muridae</taxon>
        <taxon>Murinae</taxon>
        <taxon>Rattus</taxon>
    </lineage>
</organism>
<gene>
    <name evidence="7" type="primary">Rab18</name>
</gene>
<accession>Q5EB77</accession>
<dbReference type="EC" id="3.6.5.2" evidence="4"/>
<dbReference type="EMBL" id="BC089957">
    <property type="protein sequence ID" value="AAH89957.1"/>
    <property type="molecule type" value="mRNA"/>
</dbReference>
<dbReference type="RefSeq" id="NP_001012486.1">
    <property type="nucleotide sequence ID" value="NM_001012468.1"/>
</dbReference>
<dbReference type="SMR" id="Q5EB77"/>
<dbReference type="BioGRID" id="258615">
    <property type="interactions" value="2"/>
</dbReference>
<dbReference type="FunCoup" id="Q5EB77">
    <property type="interactions" value="3868"/>
</dbReference>
<dbReference type="IntAct" id="Q5EB77">
    <property type="interactions" value="4"/>
</dbReference>
<dbReference type="MINT" id="Q5EB77"/>
<dbReference type="STRING" id="10116.ENSRNOP00000025828"/>
<dbReference type="iPTMnet" id="Q5EB77"/>
<dbReference type="PhosphoSitePlus" id="Q5EB77"/>
<dbReference type="jPOST" id="Q5EB77"/>
<dbReference type="PaxDb" id="10116-ENSRNOP00000025828"/>
<dbReference type="GeneID" id="307039"/>
<dbReference type="KEGG" id="rno:307039"/>
<dbReference type="UCSC" id="RGD:1308905">
    <property type="organism name" value="rat"/>
</dbReference>
<dbReference type="AGR" id="RGD:1308905"/>
<dbReference type="CTD" id="22931"/>
<dbReference type="RGD" id="1308905">
    <property type="gene designation" value="Rab18"/>
</dbReference>
<dbReference type="VEuPathDB" id="HostDB:ENSRNOG00000018972"/>
<dbReference type="eggNOG" id="KOG0080">
    <property type="taxonomic scope" value="Eukaryota"/>
</dbReference>
<dbReference type="HOGENOM" id="CLU_041217_10_7_1"/>
<dbReference type="InParanoid" id="Q5EB77"/>
<dbReference type="OrthoDB" id="6253at9989"/>
<dbReference type="PhylomeDB" id="Q5EB77"/>
<dbReference type="TreeFam" id="TF313448"/>
<dbReference type="Reactome" id="R-RNO-6798695">
    <property type="pathway name" value="Neutrophil degranulation"/>
</dbReference>
<dbReference type="Reactome" id="R-RNO-6811436">
    <property type="pathway name" value="COPI-independent Golgi-to-ER retrograde traffic"/>
</dbReference>
<dbReference type="Reactome" id="R-RNO-8873719">
    <property type="pathway name" value="RAB geranylgeranylation"/>
</dbReference>
<dbReference type="Reactome" id="R-RNO-8876198">
    <property type="pathway name" value="RAB GEFs exchange GTP for GDP on RABs"/>
</dbReference>
<dbReference type="PRO" id="PR:Q5EB77"/>
<dbReference type="Proteomes" id="UP000002494">
    <property type="component" value="Chromosome 17"/>
</dbReference>
<dbReference type="Bgee" id="ENSRNOG00000018972">
    <property type="expression patterns" value="Expressed in stomach and 19 other cell types or tissues"/>
</dbReference>
<dbReference type="GO" id="GO:0016324">
    <property type="term" value="C:apical plasma membrane"/>
    <property type="evidence" value="ECO:0007669"/>
    <property type="project" value="UniProtKB-SubCell"/>
</dbReference>
<dbReference type="GO" id="GO:0033106">
    <property type="term" value="C:cis-Golgi network membrane"/>
    <property type="evidence" value="ECO:0000250"/>
    <property type="project" value="UniProtKB"/>
</dbReference>
<dbReference type="GO" id="GO:0012505">
    <property type="term" value="C:endomembrane system"/>
    <property type="evidence" value="ECO:0000318"/>
    <property type="project" value="GO_Central"/>
</dbReference>
<dbReference type="GO" id="GO:0005789">
    <property type="term" value="C:endoplasmic reticulum membrane"/>
    <property type="evidence" value="ECO:0000250"/>
    <property type="project" value="UniProtKB"/>
</dbReference>
<dbReference type="GO" id="GO:0071782">
    <property type="term" value="C:endoplasmic reticulum tubular network"/>
    <property type="evidence" value="ECO:0000266"/>
    <property type="project" value="RGD"/>
</dbReference>
<dbReference type="GO" id="GO:0005794">
    <property type="term" value="C:Golgi apparatus"/>
    <property type="evidence" value="ECO:0000318"/>
    <property type="project" value="GO_Central"/>
</dbReference>
<dbReference type="GO" id="GO:0005811">
    <property type="term" value="C:lipid droplet"/>
    <property type="evidence" value="ECO:0000250"/>
    <property type="project" value="UniProtKB"/>
</dbReference>
<dbReference type="GO" id="GO:0045202">
    <property type="term" value="C:synapse"/>
    <property type="evidence" value="ECO:0000314"/>
    <property type="project" value="SynGO"/>
</dbReference>
<dbReference type="GO" id="GO:0019003">
    <property type="term" value="F:GDP binding"/>
    <property type="evidence" value="ECO:0000250"/>
    <property type="project" value="UniProtKB"/>
</dbReference>
<dbReference type="GO" id="GO:0005525">
    <property type="term" value="F:GTP binding"/>
    <property type="evidence" value="ECO:0007669"/>
    <property type="project" value="UniProtKB-KW"/>
</dbReference>
<dbReference type="GO" id="GO:0003924">
    <property type="term" value="F:GTPase activity"/>
    <property type="evidence" value="ECO:0000250"/>
    <property type="project" value="UniProtKB"/>
</dbReference>
<dbReference type="GO" id="GO:0007420">
    <property type="term" value="P:brain development"/>
    <property type="evidence" value="ECO:0000250"/>
    <property type="project" value="UniProtKB"/>
</dbReference>
<dbReference type="GO" id="GO:0071786">
    <property type="term" value="P:endoplasmic reticulum tubular network organization"/>
    <property type="evidence" value="ECO:0000266"/>
    <property type="project" value="RGD"/>
</dbReference>
<dbReference type="GO" id="GO:0001654">
    <property type="term" value="P:eye development"/>
    <property type="evidence" value="ECO:0000250"/>
    <property type="project" value="UniProtKB"/>
</dbReference>
<dbReference type="GO" id="GO:0051170">
    <property type="term" value="P:import into nucleus"/>
    <property type="evidence" value="ECO:0000266"/>
    <property type="project" value="RGD"/>
</dbReference>
<dbReference type="GO" id="GO:0006886">
    <property type="term" value="P:intracellular protein transport"/>
    <property type="evidence" value="ECO:0000318"/>
    <property type="project" value="GO_Central"/>
</dbReference>
<dbReference type="GO" id="GO:0034389">
    <property type="term" value="P:lipid droplet organization"/>
    <property type="evidence" value="ECO:0000266"/>
    <property type="project" value="RGD"/>
</dbReference>
<dbReference type="CDD" id="cd01863">
    <property type="entry name" value="Rab18"/>
    <property type="match status" value="1"/>
</dbReference>
<dbReference type="FunFam" id="3.40.50.300:FF:000430">
    <property type="entry name" value="Probable Ras-related protein Rab-18"/>
    <property type="match status" value="1"/>
</dbReference>
<dbReference type="Gene3D" id="3.40.50.300">
    <property type="entry name" value="P-loop containing nucleotide triphosphate hydrolases"/>
    <property type="match status" value="1"/>
</dbReference>
<dbReference type="InterPro" id="IPR027417">
    <property type="entry name" value="P-loop_NTPase"/>
</dbReference>
<dbReference type="InterPro" id="IPR050227">
    <property type="entry name" value="Rab"/>
</dbReference>
<dbReference type="InterPro" id="IPR025662">
    <property type="entry name" value="Sigma_54_int_dom_ATP-bd_1"/>
</dbReference>
<dbReference type="InterPro" id="IPR005225">
    <property type="entry name" value="Small_GTP-bd"/>
</dbReference>
<dbReference type="InterPro" id="IPR001806">
    <property type="entry name" value="Small_GTPase"/>
</dbReference>
<dbReference type="NCBIfam" id="TIGR00231">
    <property type="entry name" value="small_GTP"/>
    <property type="match status" value="1"/>
</dbReference>
<dbReference type="PANTHER" id="PTHR47977">
    <property type="entry name" value="RAS-RELATED PROTEIN RAB"/>
    <property type="match status" value="1"/>
</dbReference>
<dbReference type="Pfam" id="PF00071">
    <property type="entry name" value="Ras"/>
    <property type="match status" value="1"/>
</dbReference>
<dbReference type="PRINTS" id="PR00449">
    <property type="entry name" value="RASTRNSFRMNG"/>
</dbReference>
<dbReference type="SMART" id="SM00177">
    <property type="entry name" value="ARF"/>
    <property type="match status" value="1"/>
</dbReference>
<dbReference type="SMART" id="SM00175">
    <property type="entry name" value="RAB"/>
    <property type="match status" value="1"/>
</dbReference>
<dbReference type="SMART" id="SM00176">
    <property type="entry name" value="RAN"/>
    <property type="match status" value="1"/>
</dbReference>
<dbReference type="SMART" id="SM00173">
    <property type="entry name" value="RAS"/>
    <property type="match status" value="1"/>
</dbReference>
<dbReference type="SMART" id="SM00174">
    <property type="entry name" value="RHO"/>
    <property type="match status" value="1"/>
</dbReference>
<dbReference type="SUPFAM" id="SSF52540">
    <property type="entry name" value="P-loop containing nucleoside triphosphate hydrolases"/>
    <property type="match status" value="1"/>
</dbReference>
<dbReference type="PROSITE" id="PS51419">
    <property type="entry name" value="RAB"/>
    <property type="match status" value="1"/>
</dbReference>
<feature type="chain" id="PRO_0000121196" description="Ras-related protein Rab-18">
    <location>
        <begin position="1"/>
        <end position="203"/>
    </location>
</feature>
<feature type="propeptide" id="PRO_0000370764" description="Removed in mature form" evidence="5">
    <location>
        <begin position="204"/>
        <end position="206"/>
    </location>
</feature>
<feature type="short sequence motif" description="Switch 1" evidence="3">
    <location>
        <begin position="31"/>
        <end position="45"/>
    </location>
</feature>
<feature type="short sequence motif" description="Switch 2" evidence="3">
    <location>
        <begin position="63"/>
        <end position="80"/>
    </location>
</feature>
<feature type="binding site" evidence="4">
    <location>
        <position position="17"/>
    </location>
    <ligand>
        <name>GTP</name>
        <dbReference type="ChEBI" id="CHEBI:37565"/>
    </ligand>
</feature>
<feature type="binding site" evidence="4">
    <location>
        <position position="20"/>
    </location>
    <ligand>
        <name>GTP</name>
        <dbReference type="ChEBI" id="CHEBI:37565"/>
    </ligand>
</feature>
<feature type="binding site" evidence="4">
    <location>
        <position position="21"/>
    </location>
    <ligand>
        <name>GTP</name>
        <dbReference type="ChEBI" id="CHEBI:37565"/>
    </ligand>
</feature>
<feature type="binding site" evidence="4">
    <location>
        <position position="22"/>
    </location>
    <ligand>
        <name>GTP</name>
        <dbReference type="ChEBI" id="CHEBI:37565"/>
    </ligand>
</feature>
<feature type="binding site" evidence="4">
    <location>
        <position position="22"/>
    </location>
    <ligand>
        <name>Mg(2+)</name>
        <dbReference type="ChEBI" id="CHEBI:18420"/>
    </ligand>
</feature>
<feature type="binding site" evidence="4">
    <location>
        <position position="23"/>
    </location>
    <ligand>
        <name>GTP</name>
        <dbReference type="ChEBI" id="CHEBI:37565"/>
    </ligand>
</feature>
<feature type="binding site" evidence="4">
    <location>
        <position position="34"/>
    </location>
    <ligand>
        <name>GTP</name>
        <dbReference type="ChEBI" id="CHEBI:37565"/>
    </ligand>
</feature>
<feature type="binding site" evidence="4">
    <location>
        <position position="35"/>
    </location>
    <ligand>
        <name>GTP</name>
        <dbReference type="ChEBI" id="CHEBI:37565"/>
    </ligand>
</feature>
<feature type="binding site" evidence="4">
    <location>
        <position position="40"/>
    </location>
    <ligand>
        <name>GTP</name>
        <dbReference type="ChEBI" id="CHEBI:37565"/>
    </ligand>
</feature>
<feature type="binding site" evidence="4">
    <location>
        <position position="40"/>
    </location>
    <ligand>
        <name>Mg(2+)</name>
        <dbReference type="ChEBI" id="CHEBI:18420"/>
    </ligand>
</feature>
<feature type="binding site" evidence="4">
    <location>
        <position position="66"/>
    </location>
    <ligand>
        <name>GTP</name>
        <dbReference type="ChEBI" id="CHEBI:37565"/>
    </ligand>
</feature>
<feature type="binding site" evidence="4">
    <location>
        <position position="123"/>
    </location>
    <ligand>
        <name>GTP</name>
        <dbReference type="ChEBI" id="CHEBI:37565"/>
    </ligand>
</feature>
<feature type="binding site" evidence="4">
    <location>
        <position position="125"/>
    </location>
    <ligand>
        <name>GTP</name>
        <dbReference type="ChEBI" id="CHEBI:37565"/>
    </ligand>
</feature>
<feature type="binding site" evidence="4">
    <location>
        <position position="152"/>
    </location>
    <ligand>
        <name>GTP</name>
        <dbReference type="ChEBI" id="CHEBI:37565"/>
    </ligand>
</feature>
<feature type="modified residue" description="N-acetylmethionine" evidence="4">
    <location>
        <position position="1"/>
    </location>
</feature>
<feature type="modified residue" description="Phosphoserine" evidence="2">
    <location>
        <position position="144"/>
    </location>
</feature>
<feature type="modified residue" description="Cysteine methyl ester" evidence="5">
    <location>
        <position position="203"/>
    </location>
</feature>
<feature type="lipid moiety-binding region" description="S-palmitoyl cysteine" evidence="5">
    <location>
        <position position="199"/>
    </location>
</feature>
<feature type="lipid moiety-binding region" description="S-geranylgeranyl cysteine" evidence="1">
    <location>
        <position position="203"/>
    </location>
</feature>
<sequence length="206" mass="22976">MDEDVLTTLKILIIGESGVGKSSLLLRFTDDTFDPELAATIGVDFKVKTISVDGNKAKLAIWDTAGQERFRTLTPSYYRGAQGVILVYDVTRRDTFVKLDNWLNELETYCTRNDIVNMLVGNKIDKENREVDRNEGLKFARKHSMLFIEASAKTCDGVQCAFEELVEKIIQTPGLWESENQNKGVKLSPREESHGGGACGGYCSVL</sequence>
<name>RAB18_RAT</name>
<keyword id="KW-0007">Acetylation</keyword>
<keyword id="KW-1003">Cell membrane</keyword>
<keyword id="KW-0217">Developmental protein</keyword>
<keyword id="KW-0256">Endoplasmic reticulum</keyword>
<keyword id="KW-0333">Golgi apparatus</keyword>
<keyword id="KW-0342">GTP-binding</keyword>
<keyword id="KW-0378">Hydrolase</keyword>
<keyword id="KW-0551">Lipid droplet</keyword>
<keyword id="KW-0449">Lipoprotein</keyword>
<keyword id="KW-0460">Magnesium</keyword>
<keyword id="KW-0472">Membrane</keyword>
<keyword id="KW-0479">Metal-binding</keyword>
<keyword id="KW-0488">Methylation</keyword>
<keyword id="KW-0547">Nucleotide-binding</keyword>
<keyword id="KW-0564">Palmitate</keyword>
<keyword id="KW-0597">Phosphoprotein</keyword>
<keyword id="KW-0636">Prenylation</keyword>
<keyword id="KW-0653">Protein transport</keyword>
<keyword id="KW-1185">Reference proteome</keyword>
<keyword id="KW-0813">Transport</keyword>
<proteinExistence type="evidence at transcript level"/>
<evidence type="ECO:0000250" key="1"/>
<evidence type="ECO:0000250" key="2">
    <source>
        <dbReference type="UniProtKB" id="P35293"/>
    </source>
</evidence>
<evidence type="ECO:0000250" key="3">
    <source>
        <dbReference type="UniProtKB" id="P62820"/>
    </source>
</evidence>
<evidence type="ECO:0000250" key="4">
    <source>
        <dbReference type="UniProtKB" id="Q9NP72"/>
    </source>
</evidence>
<evidence type="ECO:0000255" key="5"/>
<evidence type="ECO:0000305" key="6"/>
<evidence type="ECO:0000312" key="7">
    <source>
        <dbReference type="RGD" id="1308905"/>
    </source>
</evidence>
<reference key="1">
    <citation type="journal article" date="2004" name="Genome Res.">
        <title>The status, quality, and expansion of the NIH full-length cDNA project: the Mammalian Gene Collection (MGC).</title>
        <authorList>
            <consortium name="The MGC Project Team"/>
        </authorList>
    </citation>
    <scope>NUCLEOTIDE SEQUENCE [LARGE SCALE MRNA]</scope>
    <source>
        <tissue>Brain</tissue>
    </source>
</reference>
<protein>
    <recommendedName>
        <fullName>Ras-related protein Rab-18</fullName>
        <ecNumber evidence="4">3.6.5.2</ecNumber>
    </recommendedName>
</protein>